<accession>O31811</accession>
<protein>
    <recommendedName>
        <fullName>Uncharacterized membrane protein YndG</fullName>
    </recommendedName>
</protein>
<reference key="1">
    <citation type="journal article" date="1997" name="Nature">
        <title>The complete genome sequence of the Gram-positive bacterium Bacillus subtilis.</title>
        <authorList>
            <person name="Kunst F."/>
            <person name="Ogasawara N."/>
            <person name="Moszer I."/>
            <person name="Albertini A.M."/>
            <person name="Alloni G."/>
            <person name="Azevedo V."/>
            <person name="Bertero M.G."/>
            <person name="Bessieres P."/>
            <person name="Bolotin A."/>
            <person name="Borchert S."/>
            <person name="Borriss R."/>
            <person name="Boursier L."/>
            <person name="Brans A."/>
            <person name="Braun M."/>
            <person name="Brignell S.C."/>
            <person name="Bron S."/>
            <person name="Brouillet S."/>
            <person name="Bruschi C.V."/>
            <person name="Caldwell B."/>
            <person name="Capuano V."/>
            <person name="Carter N.M."/>
            <person name="Choi S.-K."/>
            <person name="Codani J.-J."/>
            <person name="Connerton I.F."/>
            <person name="Cummings N.J."/>
            <person name="Daniel R.A."/>
            <person name="Denizot F."/>
            <person name="Devine K.M."/>
            <person name="Duesterhoeft A."/>
            <person name="Ehrlich S.D."/>
            <person name="Emmerson P.T."/>
            <person name="Entian K.-D."/>
            <person name="Errington J."/>
            <person name="Fabret C."/>
            <person name="Ferrari E."/>
            <person name="Foulger D."/>
            <person name="Fritz C."/>
            <person name="Fujita M."/>
            <person name="Fujita Y."/>
            <person name="Fuma S."/>
            <person name="Galizzi A."/>
            <person name="Galleron N."/>
            <person name="Ghim S.-Y."/>
            <person name="Glaser P."/>
            <person name="Goffeau A."/>
            <person name="Golightly E.J."/>
            <person name="Grandi G."/>
            <person name="Guiseppi G."/>
            <person name="Guy B.J."/>
            <person name="Haga K."/>
            <person name="Haiech J."/>
            <person name="Harwood C.R."/>
            <person name="Henaut A."/>
            <person name="Hilbert H."/>
            <person name="Holsappel S."/>
            <person name="Hosono S."/>
            <person name="Hullo M.-F."/>
            <person name="Itaya M."/>
            <person name="Jones L.-M."/>
            <person name="Joris B."/>
            <person name="Karamata D."/>
            <person name="Kasahara Y."/>
            <person name="Klaerr-Blanchard M."/>
            <person name="Klein C."/>
            <person name="Kobayashi Y."/>
            <person name="Koetter P."/>
            <person name="Koningstein G."/>
            <person name="Krogh S."/>
            <person name="Kumano M."/>
            <person name="Kurita K."/>
            <person name="Lapidus A."/>
            <person name="Lardinois S."/>
            <person name="Lauber J."/>
            <person name="Lazarevic V."/>
            <person name="Lee S.-M."/>
            <person name="Levine A."/>
            <person name="Liu H."/>
            <person name="Masuda S."/>
            <person name="Mauel C."/>
            <person name="Medigue C."/>
            <person name="Medina N."/>
            <person name="Mellado R.P."/>
            <person name="Mizuno M."/>
            <person name="Moestl D."/>
            <person name="Nakai S."/>
            <person name="Noback M."/>
            <person name="Noone D."/>
            <person name="O'Reilly M."/>
            <person name="Ogawa K."/>
            <person name="Ogiwara A."/>
            <person name="Oudega B."/>
            <person name="Park S.-H."/>
            <person name="Parro V."/>
            <person name="Pohl T.M."/>
            <person name="Portetelle D."/>
            <person name="Porwollik S."/>
            <person name="Prescott A.M."/>
            <person name="Presecan E."/>
            <person name="Pujic P."/>
            <person name="Purnelle B."/>
            <person name="Rapoport G."/>
            <person name="Rey M."/>
            <person name="Reynolds S."/>
            <person name="Rieger M."/>
            <person name="Rivolta C."/>
            <person name="Rocha E."/>
            <person name="Roche B."/>
            <person name="Rose M."/>
            <person name="Sadaie Y."/>
            <person name="Sato T."/>
            <person name="Scanlan E."/>
            <person name="Schleich S."/>
            <person name="Schroeter R."/>
            <person name="Scoffone F."/>
            <person name="Sekiguchi J."/>
            <person name="Sekowska A."/>
            <person name="Seror S.J."/>
            <person name="Serror P."/>
            <person name="Shin B.-S."/>
            <person name="Soldo B."/>
            <person name="Sorokin A."/>
            <person name="Tacconi E."/>
            <person name="Takagi T."/>
            <person name="Takahashi H."/>
            <person name="Takemaru K."/>
            <person name="Takeuchi M."/>
            <person name="Tamakoshi A."/>
            <person name="Tanaka T."/>
            <person name="Terpstra P."/>
            <person name="Tognoni A."/>
            <person name="Tosato V."/>
            <person name="Uchiyama S."/>
            <person name="Vandenbol M."/>
            <person name="Vannier F."/>
            <person name="Vassarotti A."/>
            <person name="Viari A."/>
            <person name="Wambutt R."/>
            <person name="Wedler E."/>
            <person name="Wedler H."/>
            <person name="Weitzenegger T."/>
            <person name="Winters P."/>
            <person name="Wipat A."/>
            <person name="Yamamoto H."/>
            <person name="Yamane K."/>
            <person name="Yasumoto K."/>
            <person name="Yata K."/>
            <person name="Yoshida K."/>
            <person name="Yoshikawa H.-F."/>
            <person name="Zumstein E."/>
            <person name="Yoshikawa H."/>
            <person name="Danchin A."/>
        </authorList>
    </citation>
    <scope>NUCLEOTIDE SEQUENCE [LARGE SCALE GENOMIC DNA]</scope>
    <source>
        <strain>168</strain>
    </source>
</reference>
<organism>
    <name type="scientific">Bacillus subtilis (strain 168)</name>
    <dbReference type="NCBI Taxonomy" id="224308"/>
    <lineage>
        <taxon>Bacteria</taxon>
        <taxon>Bacillati</taxon>
        <taxon>Bacillota</taxon>
        <taxon>Bacilli</taxon>
        <taxon>Bacillales</taxon>
        <taxon>Bacillaceae</taxon>
        <taxon>Bacillus</taxon>
    </lineage>
</organism>
<gene>
    <name type="primary">yndG</name>
    <name type="ordered locus">BSU17780</name>
</gene>
<dbReference type="EMBL" id="AL009126">
    <property type="protein sequence ID" value="CAB13662.1"/>
    <property type="molecule type" value="Genomic_DNA"/>
</dbReference>
<dbReference type="PIR" id="G69889">
    <property type="entry name" value="G69889"/>
</dbReference>
<dbReference type="RefSeq" id="NP_389661.1">
    <property type="nucleotide sequence ID" value="NC_000964.3"/>
</dbReference>
<dbReference type="RefSeq" id="WP_003231618.1">
    <property type="nucleotide sequence ID" value="NZ_OZ025638.1"/>
</dbReference>
<dbReference type="FunCoup" id="O31811">
    <property type="interactions" value="41"/>
</dbReference>
<dbReference type="STRING" id="224308.BSU17780"/>
<dbReference type="PaxDb" id="224308-BSU17780"/>
<dbReference type="EnsemblBacteria" id="CAB13662">
    <property type="protein sequence ID" value="CAB13662"/>
    <property type="gene ID" value="BSU_17780"/>
</dbReference>
<dbReference type="GeneID" id="939565"/>
<dbReference type="KEGG" id="bsu:BSU17780"/>
<dbReference type="PATRIC" id="fig|224308.179.peg.1938"/>
<dbReference type="eggNOG" id="ENOG5030CRY">
    <property type="taxonomic scope" value="Bacteria"/>
</dbReference>
<dbReference type="InParanoid" id="O31811"/>
<dbReference type="OrthoDB" id="6199084at2"/>
<dbReference type="BioCyc" id="BSUB:BSU17780-MONOMER"/>
<dbReference type="Proteomes" id="UP000001570">
    <property type="component" value="Chromosome"/>
</dbReference>
<dbReference type="GO" id="GO:0005886">
    <property type="term" value="C:plasma membrane"/>
    <property type="evidence" value="ECO:0007669"/>
    <property type="project" value="UniProtKB-SubCell"/>
</dbReference>
<dbReference type="SUPFAM" id="SSF55961">
    <property type="entry name" value="Bet v1-like"/>
    <property type="match status" value="1"/>
</dbReference>
<feature type="chain" id="PRO_0000372592" description="Uncharacterized membrane protein YndG">
    <location>
        <begin position="1"/>
        <end position="268"/>
    </location>
</feature>
<feature type="transmembrane region" description="Helical" evidence="1">
    <location>
        <begin position="169"/>
        <end position="189"/>
    </location>
</feature>
<feature type="transmembrane region" description="Helical" evidence="1">
    <location>
        <begin position="190"/>
        <end position="210"/>
    </location>
</feature>
<feature type="transmembrane region" description="Helical" evidence="1">
    <location>
        <begin position="225"/>
        <end position="245"/>
    </location>
</feature>
<evidence type="ECO:0000255" key="1"/>
<evidence type="ECO:0000305" key="2"/>
<name>YNDG_BACSU</name>
<sequence length="268" mass="31048">MRQKPIYVEIEMKSDLDTLWEYTQNPSLHKEWDLRFSNITYLNSQPCEKQKFLYETRVGFGLKVSGTGETVGVFNKCSSERSSSLAFGSDHPLSLIRHGSGYWKYIQRENGKMTFLTQYQYKTAYGLLGRWIDRLLFRPLLGWATAWSFDALRLWVEQNKHPKRFIRSAIIYVFMCLFFSLFWFYQGFAGVKTSILTGTAEIGLAILWLLPLKRKWIIHGVQACIFAGFACLGSEIFMWVLLSVFSAASGALSLQLPSARRTKRKRKK</sequence>
<comment type="subcellular location">
    <subcellularLocation>
        <location evidence="2">Cell membrane</location>
        <topology evidence="2">Multi-pass membrane protein</topology>
    </subcellularLocation>
</comment>
<keyword id="KW-1003">Cell membrane</keyword>
<keyword id="KW-0472">Membrane</keyword>
<keyword id="KW-1185">Reference proteome</keyword>
<keyword id="KW-0812">Transmembrane</keyword>
<keyword id="KW-1133">Transmembrane helix</keyword>
<proteinExistence type="predicted"/>